<dbReference type="EC" id="2.4.2.18" evidence="1"/>
<dbReference type="EMBL" id="CP001337">
    <property type="protein sequence ID" value="ACL25631.1"/>
    <property type="molecule type" value="Genomic_DNA"/>
</dbReference>
<dbReference type="RefSeq" id="WP_015941488.1">
    <property type="nucleotide sequence ID" value="NC_011831.1"/>
</dbReference>
<dbReference type="SMR" id="B8G5C5"/>
<dbReference type="STRING" id="326427.Cagg_2768"/>
<dbReference type="KEGG" id="cag:Cagg_2768"/>
<dbReference type="eggNOG" id="COG0547">
    <property type="taxonomic scope" value="Bacteria"/>
</dbReference>
<dbReference type="HOGENOM" id="CLU_034315_2_1_0"/>
<dbReference type="OrthoDB" id="9806430at2"/>
<dbReference type="UniPathway" id="UPA00035">
    <property type="reaction ID" value="UER00041"/>
</dbReference>
<dbReference type="Proteomes" id="UP000002508">
    <property type="component" value="Chromosome"/>
</dbReference>
<dbReference type="GO" id="GO:0005829">
    <property type="term" value="C:cytosol"/>
    <property type="evidence" value="ECO:0007669"/>
    <property type="project" value="TreeGrafter"/>
</dbReference>
<dbReference type="GO" id="GO:0004048">
    <property type="term" value="F:anthranilate phosphoribosyltransferase activity"/>
    <property type="evidence" value="ECO:0007669"/>
    <property type="project" value="UniProtKB-UniRule"/>
</dbReference>
<dbReference type="GO" id="GO:0000287">
    <property type="term" value="F:magnesium ion binding"/>
    <property type="evidence" value="ECO:0007669"/>
    <property type="project" value="UniProtKB-UniRule"/>
</dbReference>
<dbReference type="GO" id="GO:0000162">
    <property type="term" value="P:L-tryptophan biosynthetic process"/>
    <property type="evidence" value="ECO:0007669"/>
    <property type="project" value="UniProtKB-UniRule"/>
</dbReference>
<dbReference type="FunFam" id="1.20.970.10:FF:000006">
    <property type="entry name" value="Anthranilate phosphoribosyltransferase"/>
    <property type="match status" value="1"/>
</dbReference>
<dbReference type="FunFam" id="3.40.1030.10:FF:000002">
    <property type="entry name" value="Anthranilate phosphoribosyltransferase"/>
    <property type="match status" value="1"/>
</dbReference>
<dbReference type="Gene3D" id="3.40.1030.10">
    <property type="entry name" value="Nucleoside phosphorylase/phosphoribosyltransferase catalytic domain"/>
    <property type="match status" value="1"/>
</dbReference>
<dbReference type="Gene3D" id="1.20.970.10">
    <property type="entry name" value="Transferase, Pyrimidine Nucleoside Phosphorylase, Chain C"/>
    <property type="match status" value="1"/>
</dbReference>
<dbReference type="HAMAP" id="MF_00211">
    <property type="entry name" value="TrpD"/>
    <property type="match status" value="1"/>
</dbReference>
<dbReference type="InterPro" id="IPR005940">
    <property type="entry name" value="Anthranilate_Pribosyl_Tfrase"/>
</dbReference>
<dbReference type="InterPro" id="IPR000312">
    <property type="entry name" value="Glycosyl_Trfase_fam3"/>
</dbReference>
<dbReference type="InterPro" id="IPR017459">
    <property type="entry name" value="Glycosyl_Trfase_fam3_N_dom"/>
</dbReference>
<dbReference type="InterPro" id="IPR036320">
    <property type="entry name" value="Glycosyl_Trfase_fam3_N_dom_sf"/>
</dbReference>
<dbReference type="InterPro" id="IPR035902">
    <property type="entry name" value="Nuc_phospho_transferase"/>
</dbReference>
<dbReference type="NCBIfam" id="TIGR01245">
    <property type="entry name" value="trpD"/>
    <property type="match status" value="1"/>
</dbReference>
<dbReference type="PANTHER" id="PTHR43285">
    <property type="entry name" value="ANTHRANILATE PHOSPHORIBOSYLTRANSFERASE"/>
    <property type="match status" value="1"/>
</dbReference>
<dbReference type="PANTHER" id="PTHR43285:SF2">
    <property type="entry name" value="ANTHRANILATE PHOSPHORIBOSYLTRANSFERASE"/>
    <property type="match status" value="1"/>
</dbReference>
<dbReference type="Pfam" id="PF02885">
    <property type="entry name" value="Glycos_trans_3N"/>
    <property type="match status" value="1"/>
</dbReference>
<dbReference type="Pfam" id="PF00591">
    <property type="entry name" value="Glycos_transf_3"/>
    <property type="match status" value="1"/>
</dbReference>
<dbReference type="SUPFAM" id="SSF52418">
    <property type="entry name" value="Nucleoside phosphorylase/phosphoribosyltransferase catalytic domain"/>
    <property type="match status" value="1"/>
</dbReference>
<dbReference type="SUPFAM" id="SSF47648">
    <property type="entry name" value="Nucleoside phosphorylase/phosphoribosyltransferase N-terminal domain"/>
    <property type="match status" value="1"/>
</dbReference>
<proteinExistence type="inferred from homology"/>
<reference key="1">
    <citation type="submission" date="2008-12" db="EMBL/GenBank/DDBJ databases">
        <title>Complete sequence of Chloroflexus aggregans DSM 9485.</title>
        <authorList>
            <consortium name="US DOE Joint Genome Institute"/>
            <person name="Lucas S."/>
            <person name="Copeland A."/>
            <person name="Lapidus A."/>
            <person name="Glavina del Rio T."/>
            <person name="Dalin E."/>
            <person name="Tice H."/>
            <person name="Pitluck S."/>
            <person name="Foster B."/>
            <person name="Larimer F."/>
            <person name="Land M."/>
            <person name="Hauser L."/>
            <person name="Kyrpides N."/>
            <person name="Mikhailova N."/>
            <person name="Bryant D.A."/>
            <person name="Richardson P."/>
        </authorList>
    </citation>
    <scope>NUCLEOTIDE SEQUENCE [LARGE SCALE GENOMIC DNA]</scope>
    <source>
        <strain>MD-66 / DSM 9485</strain>
    </source>
</reference>
<comment type="function">
    <text evidence="1">Catalyzes the transfer of the phosphoribosyl group of 5-phosphorylribose-1-pyrophosphate (PRPP) to anthranilate to yield N-(5'-phosphoribosyl)-anthranilate (PRA).</text>
</comment>
<comment type="catalytic activity">
    <reaction evidence="1">
        <text>N-(5-phospho-beta-D-ribosyl)anthranilate + diphosphate = 5-phospho-alpha-D-ribose 1-diphosphate + anthranilate</text>
        <dbReference type="Rhea" id="RHEA:11768"/>
        <dbReference type="ChEBI" id="CHEBI:16567"/>
        <dbReference type="ChEBI" id="CHEBI:18277"/>
        <dbReference type="ChEBI" id="CHEBI:33019"/>
        <dbReference type="ChEBI" id="CHEBI:58017"/>
        <dbReference type="EC" id="2.4.2.18"/>
    </reaction>
</comment>
<comment type="cofactor">
    <cofactor evidence="1">
        <name>Mg(2+)</name>
        <dbReference type="ChEBI" id="CHEBI:18420"/>
    </cofactor>
    <text evidence="1">Binds 2 magnesium ions per monomer.</text>
</comment>
<comment type="pathway">
    <text evidence="1">Amino-acid biosynthesis; L-tryptophan biosynthesis; L-tryptophan from chorismate: step 2/5.</text>
</comment>
<comment type="subunit">
    <text evidence="1">Homodimer.</text>
</comment>
<comment type="similarity">
    <text evidence="1">Belongs to the anthranilate phosphoribosyltransferase family.</text>
</comment>
<name>TRPD_CHLAD</name>
<protein>
    <recommendedName>
        <fullName evidence="1">Anthranilate phosphoribosyltransferase</fullName>
        <ecNumber evidence="1">2.4.2.18</ecNumber>
    </recommendedName>
</protein>
<accession>B8G5C5</accession>
<feature type="chain" id="PRO_1000198812" description="Anthranilate phosphoribosyltransferase">
    <location>
        <begin position="1"/>
        <end position="340"/>
    </location>
</feature>
<feature type="binding site" evidence="1">
    <location>
        <position position="80"/>
    </location>
    <ligand>
        <name>5-phospho-alpha-D-ribose 1-diphosphate</name>
        <dbReference type="ChEBI" id="CHEBI:58017"/>
    </ligand>
</feature>
<feature type="binding site" evidence="1">
    <location>
        <position position="80"/>
    </location>
    <ligand>
        <name>anthranilate</name>
        <dbReference type="ChEBI" id="CHEBI:16567"/>
        <label>1</label>
    </ligand>
</feature>
<feature type="binding site" evidence="1">
    <location>
        <begin position="83"/>
        <end position="84"/>
    </location>
    <ligand>
        <name>5-phospho-alpha-D-ribose 1-diphosphate</name>
        <dbReference type="ChEBI" id="CHEBI:58017"/>
    </ligand>
</feature>
<feature type="binding site" evidence="1">
    <location>
        <position position="88"/>
    </location>
    <ligand>
        <name>5-phospho-alpha-D-ribose 1-diphosphate</name>
        <dbReference type="ChEBI" id="CHEBI:58017"/>
    </ligand>
</feature>
<feature type="binding site" evidence="1">
    <location>
        <begin position="90"/>
        <end position="93"/>
    </location>
    <ligand>
        <name>5-phospho-alpha-D-ribose 1-diphosphate</name>
        <dbReference type="ChEBI" id="CHEBI:58017"/>
    </ligand>
</feature>
<feature type="binding site" evidence="1">
    <location>
        <position position="92"/>
    </location>
    <ligand>
        <name>Mg(2+)</name>
        <dbReference type="ChEBI" id="CHEBI:18420"/>
        <label>1</label>
    </ligand>
</feature>
<feature type="binding site" evidence="1">
    <location>
        <begin position="108"/>
        <end position="116"/>
    </location>
    <ligand>
        <name>5-phospho-alpha-D-ribose 1-diphosphate</name>
        <dbReference type="ChEBI" id="CHEBI:58017"/>
    </ligand>
</feature>
<feature type="binding site" evidence="1">
    <location>
        <position position="111"/>
    </location>
    <ligand>
        <name>anthranilate</name>
        <dbReference type="ChEBI" id="CHEBI:16567"/>
        <label>1</label>
    </ligand>
</feature>
<feature type="binding site" evidence="1">
    <location>
        <position position="120"/>
    </location>
    <ligand>
        <name>5-phospho-alpha-D-ribose 1-diphosphate</name>
        <dbReference type="ChEBI" id="CHEBI:58017"/>
    </ligand>
</feature>
<feature type="binding site" evidence="1">
    <location>
        <position position="166"/>
    </location>
    <ligand>
        <name>anthranilate</name>
        <dbReference type="ChEBI" id="CHEBI:16567"/>
        <label>2</label>
    </ligand>
</feature>
<feature type="binding site" evidence="1">
    <location>
        <position position="225"/>
    </location>
    <ligand>
        <name>Mg(2+)</name>
        <dbReference type="ChEBI" id="CHEBI:18420"/>
        <label>2</label>
    </ligand>
</feature>
<feature type="binding site" evidence="1">
    <location>
        <position position="226"/>
    </location>
    <ligand>
        <name>Mg(2+)</name>
        <dbReference type="ChEBI" id="CHEBI:18420"/>
        <label>1</label>
    </ligand>
</feature>
<feature type="binding site" evidence="1">
    <location>
        <position position="226"/>
    </location>
    <ligand>
        <name>Mg(2+)</name>
        <dbReference type="ChEBI" id="CHEBI:18420"/>
        <label>2</label>
    </ligand>
</feature>
<evidence type="ECO:0000255" key="1">
    <source>
        <dbReference type="HAMAP-Rule" id="MF_00211"/>
    </source>
</evidence>
<gene>
    <name evidence="1" type="primary">trpD</name>
    <name type="ordered locus">Cagg_2768</name>
</gene>
<organism>
    <name type="scientific">Chloroflexus aggregans (strain MD-66 / DSM 9485)</name>
    <dbReference type="NCBI Taxonomy" id="326427"/>
    <lineage>
        <taxon>Bacteria</taxon>
        <taxon>Bacillati</taxon>
        <taxon>Chloroflexota</taxon>
        <taxon>Chloroflexia</taxon>
        <taxon>Chloroflexales</taxon>
        <taxon>Chloroflexineae</taxon>
        <taxon>Chloroflexaceae</taxon>
        <taxon>Chloroflexus</taxon>
    </lineage>
</organism>
<sequence length="340" mass="35410">MNIREAIAAVVARRDLTQAEAASVMEEIMNGTATPAQIAAFLTALHIKGETDAEIAGMAAVMREKATHVYFDGPVIDTCGTGGDGAHTFNISTTAAFVAAGAGLTVAKHGNRAMSSVCGSADVLEGLGVQIELDAEGVARCLRDAGIGFMFAPKFHPAMRFAGPVRREIGIRTVFNILGPLTNPARARYQVLGVASAALAEKLANALSRLDTVHALVVHGDGGVDELTLSGPNLIFEVRAGHALRQMIVAPEDVGLERAPREALRGGDVAYNVALVRAILSGEDRGPRRDVVLLNAAAALVAGDVAPDLATGVKMARASIDSGRALERLHRMIAVSRGEA</sequence>
<keyword id="KW-0028">Amino-acid biosynthesis</keyword>
<keyword id="KW-0057">Aromatic amino acid biosynthesis</keyword>
<keyword id="KW-0328">Glycosyltransferase</keyword>
<keyword id="KW-0460">Magnesium</keyword>
<keyword id="KW-0479">Metal-binding</keyword>
<keyword id="KW-0808">Transferase</keyword>
<keyword id="KW-0822">Tryptophan biosynthesis</keyword>